<proteinExistence type="evidence at protein level"/>
<organism evidence="3">
    <name type="scientific">Melicytus dentatus</name>
    <name type="common">Tree violet</name>
    <dbReference type="NCBI Taxonomy" id="491106"/>
    <lineage>
        <taxon>Eukaryota</taxon>
        <taxon>Viridiplantae</taxon>
        <taxon>Streptophyta</taxon>
        <taxon>Embryophyta</taxon>
        <taxon>Tracheophyta</taxon>
        <taxon>Spermatophyta</taxon>
        <taxon>Magnoliopsida</taxon>
        <taxon>eudicotyledons</taxon>
        <taxon>Gunneridae</taxon>
        <taxon>Pentapetalae</taxon>
        <taxon>rosids</taxon>
        <taxon>fabids</taxon>
        <taxon>Malpighiales</taxon>
        <taxon>Violaceae</taxon>
        <taxon>Melicytus</taxon>
    </lineage>
</organism>
<comment type="function">
    <text evidence="1">Probably participates in a plant defense mechanism.</text>
</comment>
<comment type="domain">
    <text evidence="4">The presence of a 'disulfide through disulfide knot' structurally defines this protein as a knottin.</text>
</comment>
<comment type="PTM">
    <text evidence="1">This is a cyclic peptide.</text>
</comment>
<comment type="similarity">
    <text evidence="1">Belongs to the cyclotide family. Bracelet subfamily.</text>
</comment>
<comment type="caution">
    <text evidence="1">This peptide is cyclic. The start position was chosen by similarity to Oak1 (kalata B1) for which the DNA sequence is known.</text>
</comment>
<keyword id="KW-0903">Direct protein sequencing</keyword>
<keyword id="KW-1015">Disulfide bond</keyword>
<keyword id="KW-0611">Plant defense</keyword>
<dbReference type="SMR" id="C0HKJ2"/>
<dbReference type="GO" id="GO:0006952">
    <property type="term" value="P:defense response"/>
    <property type="evidence" value="ECO:0007669"/>
    <property type="project" value="UniProtKB-KW"/>
</dbReference>
<dbReference type="InterPro" id="IPR005535">
    <property type="entry name" value="Cyclotide"/>
</dbReference>
<dbReference type="InterPro" id="IPR012323">
    <property type="entry name" value="Cyclotide_bracelet_CS"/>
</dbReference>
<dbReference type="InterPro" id="IPR036146">
    <property type="entry name" value="Cyclotide_sf"/>
</dbReference>
<dbReference type="Pfam" id="PF03784">
    <property type="entry name" value="Cyclotide"/>
    <property type="match status" value="1"/>
</dbReference>
<dbReference type="PIRSF" id="PIRSF037891">
    <property type="entry name" value="Cycloviolacin"/>
    <property type="match status" value="1"/>
</dbReference>
<dbReference type="SUPFAM" id="SSF57038">
    <property type="entry name" value="Cyclotides"/>
    <property type="match status" value="1"/>
</dbReference>
<dbReference type="PROSITE" id="PS51052">
    <property type="entry name" value="CYCLOTIDE"/>
    <property type="match status" value="1"/>
</dbReference>
<dbReference type="PROSITE" id="PS60008">
    <property type="entry name" value="CYCLOTIDE_BRACELET"/>
    <property type="match status" value="1"/>
</dbReference>
<evidence type="ECO:0000255" key="1">
    <source>
        <dbReference type="PROSITE-ProRule" id="PRU00395"/>
    </source>
</evidence>
<evidence type="ECO:0000269" key="2">
    <source>
    </source>
</evidence>
<evidence type="ECO:0000303" key="3">
    <source>
    </source>
</evidence>
<evidence type="ECO:0000305" key="4"/>
<accession>C0HKJ2</accession>
<protein>
    <recommendedName>
        <fullName evidence="3">Cyclotide mden-J</fullName>
    </recommendedName>
</protein>
<reference evidence="4" key="1">
    <citation type="journal article" date="2017" name="J. Nat. Prod.">
        <title>Understanding the Diversity and Distribution of Cyclotides from Plants of Varied Genetic Origin.</title>
        <authorList>
            <person name="Ravipati A.S."/>
            <person name="Poth A.G."/>
            <person name="Troeira Henriques S."/>
            <person name="Bhandari M."/>
            <person name="Huang Y.H."/>
            <person name="Nino J."/>
            <person name="Colgrave M.L."/>
            <person name="Craik D.J."/>
        </authorList>
    </citation>
    <scope>PROTEIN SEQUENCE</scope>
</reference>
<sequence>GSIPCGESCVYIPCISSIVGCACKSKVCYKN</sequence>
<feature type="peptide" id="PRO_0000441373" description="Cyclotide mden-J" evidence="2">
    <location>
        <begin position="1"/>
        <end position="31"/>
    </location>
</feature>
<feature type="disulfide bond" evidence="1">
    <location>
        <begin position="5"/>
        <end position="21"/>
    </location>
</feature>
<feature type="disulfide bond" evidence="1">
    <location>
        <begin position="9"/>
        <end position="23"/>
    </location>
</feature>
<feature type="disulfide bond" evidence="1">
    <location>
        <begin position="14"/>
        <end position="28"/>
    </location>
</feature>
<feature type="cross-link" description="Cyclopeptide (Gly-Asn)" evidence="3">
    <location>
        <begin position="1"/>
        <end position="31"/>
    </location>
</feature>
<name>CYMEJ_MELDN</name>